<evidence type="ECO:0000250" key="1">
    <source>
        <dbReference type="UniProtKB" id="Q8CI95"/>
    </source>
</evidence>
<evidence type="ECO:0000255" key="2">
    <source>
        <dbReference type="PROSITE-ProRule" id="PRU00145"/>
    </source>
</evidence>
<evidence type="ECO:0000256" key="3">
    <source>
        <dbReference type="SAM" id="MobiDB-lite"/>
    </source>
</evidence>
<evidence type="ECO:0000269" key="4">
    <source>
    </source>
</evidence>
<evidence type="ECO:0000269" key="5">
    <source>
    </source>
</evidence>
<evidence type="ECO:0000269" key="6">
    <source>
    </source>
</evidence>
<evidence type="ECO:0000269" key="7">
    <source>
    </source>
</evidence>
<evidence type="ECO:0000269" key="8">
    <source>
    </source>
</evidence>
<evidence type="ECO:0000269" key="9">
    <source>
    </source>
</evidence>
<evidence type="ECO:0000305" key="10"/>
<evidence type="ECO:0007744" key="11">
    <source>
    </source>
</evidence>
<evidence type="ECO:0007744" key="12">
    <source>
    </source>
</evidence>
<evidence type="ECO:0007744" key="13">
    <source>
    </source>
</evidence>
<evidence type="ECO:0007744" key="14">
    <source>
    </source>
</evidence>
<evidence type="ECO:0007744" key="15">
    <source>
    </source>
</evidence>
<evidence type="ECO:0007744" key="16">
    <source>
    </source>
</evidence>
<evidence type="ECO:0007744" key="17">
    <source>
    </source>
</evidence>
<evidence type="ECO:0007744" key="18">
    <source>
    </source>
</evidence>
<evidence type="ECO:0007744" key="19">
    <source>
    </source>
</evidence>
<evidence type="ECO:0007744" key="20">
    <source>
    </source>
</evidence>
<evidence type="ECO:0007829" key="21">
    <source>
        <dbReference type="PDB" id="2D9X"/>
    </source>
</evidence>
<sequence length="747" mass="83643">MQGGEPVSTMKVSESEGKLEGQATAVTPNKNSSCGGGISSSSSSRGGSAKGWQYSDHMENVYGYLMKYTNLVTGWQYRFFVLNNEAGLLEYFVNEQSRNQKPRGTLQLAGAVISPSDEDSHTFTVNAASGEQYKLRATDAKERQHWVSRLQICTQHHTEAIGKNNPPLKSRSFSLASSSNSPISQRRPSQNAISFFNVGHSKLQSLSKRTNLPPDHLVEVREMMSHAEGQQRDLIRRIECLPTSGHLSSLDQDLLMLKATSMATMNCLNDCFHILQLQHASHQKGSLPSGTTIEWLEPKISLSNHYKNGADQPFATDQSKPVAVPEEQPVAESGLLAREPEEINADDEIEDTCDHKEDDLGAVEEQRSVILHLLSQLKLGMDLTRVVLPTFILEKRSLLEMYADFMSHPDLFIAITNGATAEDRMIRFVEYYLTSFHEGRKGAIAKKPYNPIIGETFHCSWKMPKSEVASSVFSSSSTQGVTNHAPLSGESLTQVGSDCYTVRFVAEQVSHHPPVSGFYAECTERKMCVNAHVWTKSKFLGMSIGVTMVGEGILSLLEHGEEYTFSLPCAYARSILTVPWVELGGKVSVNCAKTGYSASITFHTKPFYGGKLHRVTAEVKHNITNTVVCRVQGEWNSVLEFTYSNGETKYVDLTKLAVTKKRVRPLEKQDPFESRRLWKNVTDSLRESEIDKATEHKHTLEERQRTEERHRTETGTPWKTKYFIKEGDGWVYHKPLWKIIPTTQPAE</sequence>
<gene>
    <name type="primary">OSBPL11</name>
    <name type="synonym">ORP11</name>
    <name type="synonym">OSBP12</name>
</gene>
<name>OSB11_HUMAN</name>
<keyword id="KW-0002">3D-structure</keyword>
<keyword id="KW-0007">Acetylation</keyword>
<keyword id="KW-0967">Endosome</keyword>
<keyword id="KW-0333">Golgi apparatus</keyword>
<keyword id="KW-0445">Lipid transport</keyword>
<keyword id="KW-0446">Lipid-binding</keyword>
<keyword id="KW-0472">Membrane</keyword>
<keyword id="KW-0597">Phosphoprotein</keyword>
<keyword id="KW-1267">Proteomics identification</keyword>
<keyword id="KW-1185">Reference proteome</keyword>
<keyword id="KW-0813">Transport</keyword>
<proteinExistence type="evidence at protein level"/>
<dbReference type="EMBL" id="AF392454">
    <property type="protein sequence ID" value="AAL40667.1"/>
    <property type="molecule type" value="mRNA"/>
</dbReference>
<dbReference type="EMBL" id="AK292702">
    <property type="protein sequence ID" value="BAF85391.1"/>
    <property type="molecule type" value="mRNA"/>
</dbReference>
<dbReference type="EMBL" id="CH471052">
    <property type="protein sequence ID" value="EAW79389.1"/>
    <property type="molecule type" value="Genomic_DNA"/>
</dbReference>
<dbReference type="EMBL" id="BC065213">
    <property type="protein sequence ID" value="AAH65213.1"/>
    <property type="molecule type" value="mRNA"/>
</dbReference>
<dbReference type="EMBL" id="AF346292">
    <property type="protein sequence ID" value="AAK31141.1"/>
    <property type="molecule type" value="mRNA"/>
</dbReference>
<dbReference type="CCDS" id="CCDS3033.1"/>
<dbReference type="RefSeq" id="NP_073613.2">
    <property type="nucleotide sequence ID" value="NM_022776.4"/>
</dbReference>
<dbReference type="PDB" id="2D9X">
    <property type="method" value="NMR"/>
    <property type="chains" value="A=59-165"/>
</dbReference>
<dbReference type="PDBsum" id="2D9X"/>
<dbReference type="BMRB" id="Q9BXB4"/>
<dbReference type="SMR" id="Q9BXB4"/>
<dbReference type="BioGRID" id="125386">
    <property type="interactions" value="109"/>
</dbReference>
<dbReference type="ComplexPortal" id="CPX-8168">
    <property type="entry name" value="OSBPL9-OSBPL11 oxysterol-binding protein-related complex"/>
</dbReference>
<dbReference type="FunCoup" id="Q9BXB4">
    <property type="interactions" value="2653"/>
</dbReference>
<dbReference type="IntAct" id="Q9BXB4">
    <property type="interactions" value="30"/>
</dbReference>
<dbReference type="MINT" id="Q9BXB4"/>
<dbReference type="STRING" id="9606.ENSP00000296220"/>
<dbReference type="GlyGen" id="Q9BXB4">
    <property type="glycosylation" value="3 sites, 1 N-linked glycan (1 site), 1 O-linked glycan (2 sites)"/>
</dbReference>
<dbReference type="iPTMnet" id="Q9BXB4"/>
<dbReference type="PhosphoSitePlus" id="Q9BXB4"/>
<dbReference type="BioMuta" id="OSBPL11"/>
<dbReference type="DMDM" id="20139127"/>
<dbReference type="jPOST" id="Q9BXB4"/>
<dbReference type="MassIVE" id="Q9BXB4"/>
<dbReference type="PaxDb" id="9606-ENSP00000296220"/>
<dbReference type="PeptideAtlas" id="Q9BXB4"/>
<dbReference type="ProteomicsDB" id="79398"/>
<dbReference type="Pumba" id="Q9BXB4"/>
<dbReference type="Antibodypedia" id="33023">
    <property type="antibodies" value="298 antibodies from 28 providers"/>
</dbReference>
<dbReference type="DNASU" id="114885"/>
<dbReference type="Ensembl" id="ENST00000296220.6">
    <property type="protein sequence ID" value="ENSP00000296220.5"/>
    <property type="gene ID" value="ENSG00000144909.8"/>
</dbReference>
<dbReference type="GeneID" id="114885"/>
<dbReference type="KEGG" id="hsa:114885"/>
<dbReference type="MANE-Select" id="ENST00000296220.6">
    <property type="protein sequence ID" value="ENSP00000296220.5"/>
    <property type="RefSeq nucleotide sequence ID" value="NM_022776.5"/>
    <property type="RefSeq protein sequence ID" value="NP_073613.2"/>
</dbReference>
<dbReference type="UCSC" id="uc003eic.4">
    <property type="organism name" value="human"/>
</dbReference>
<dbReference type="AGR" id="HGNC:16397"/>
<dbReference type="CTD" id="114885"/>
<dbReference type="DisGeNET" id="114885"/>
<dbReference type="GeneCards" id="OSBPL11"/>
<dbReference type="HGNC" id="HGNC:16397">
    <property type="gene designation" value="OSBPL11"/>
</dbReference>
<dbReference type="HPA" id="ENSG00000144909">
    <property type="expression patterns" value="Tissue enhanced (skeletal muscle, tongue)"/>
</dbReference>
<dbReference type="MIM" id="606739">
    <property type="type" value="gene"/>
</dbReference>
<dbReference type="neXtProt" id="NX_Q9BXB4"/>
<dbReference type="OpenTargets" id="ENSG00000144909"/>
<dbReference type="PharmGKB" id="PA32825"/>
<dbReference type="VEuPathDB" id="HostDB:ENSG00000144909"/>
<dbReference type="eggNOG" id="KOG2210">
    <property type="taxonomic scope" value="Eukaryota"/>
</dbReference>
<dbReference type="GeneTree" id="ENSGT00940000158398"/>
<dbReference type="HOGENOM" id="CLU_012334_3_1_1"/>
<dbReference type="InParanoid" id="Q9BXB4"/>
<dbReference type="OMA" id="CDHKEDD"/>
<dbReference type="OrthoDB" id="48057at2759"/>
<dbReference type="PAN-GO" id="Q9BXB4">
    <property type="GO annotations" value="5 GO annotations based on evolutionary models"/>
</dbReference>
<dbReference type="PhylomeDB" id="Q9BXB4"/>
<dbReference type="TreeFam" id="TF312807"/>
<dbReference type="PathwayCommons" id="Q9BXB4"/>
<dbReference type="Reactome" id="R-HSA-9013407">
    <property type="pathway name" value="RHOH GTPase cycle"/>
</dbReference>
<dbReference type="SignaLink" id="Q9BXB4"/>
<dbReference type="BioGRID-ORCS" id="114885">
    <property type="hits" value="21 hits in 1155 CRISPR screens"/>
</dbReference>
<dbReference type="ChiTaRS" id="OSBPL11">
    <property type="organism name" value="human"/>
</dbReference>
<dbReference type="EvolutionaryTrace" id="Q9BXB4"/>
<dbReference type="GeneWiki" id="OSBPL11"/>
<dbReference type="GenomeRNAi" id="114885"/>
<dbReference type="Pharos" id="Q9BXB4">
    <property type="development level" value="Tbio"/>
</dbReference>
<dbReference type="PRO" id="PR:Q9BXB4"/>
<dbReference type="Proteomes" id="UP000005640">
    <property type="component" value="Chromosome 3"/>
</dbReference>
<dbReference type="RNAct" id="Q9BXB4">
    <property type="molecule type" value="protein"/>
</dbReference>
<dbReference type="Bgee" id="ENSG00000144909">
    <property type="expression patterns" value="Expressed in biceps brachii and 205 other cell types or tissues"/>
</dbReference>
<dbReference type="ExpressionAtlas" id="Q9BXB4">
    <property type="expression patterns" value="baseline and differential"/>
</dbReference>
<dbReference type="GO" id="GO:0005829">
    <property type="term" value="C:cytosol"/>
    <property type="evidence" value="ECO:0000318"/>
    <property type="project" value="GO_Central"/>
</dbReference>
<dbReference type="GO" id="GO:0005794">
    <property type="term" value="C:Golgi apparatus"/>
    <property type="evidence" value="ECO:0000314"/>
    <property type="project" value="HPA"/>
</dbReference>
<dbReference type="GO" id="GO:0031902">
    <property type="term" value="C:late endosome membrane"/>
    <property type="evidence" value="ECO:0007669"/>
    <property type="project" value="UniProtKB-SubCell"/>
</dbReference>
<dbReference type="GO" id="GO:0016020">
    <property type="term" value="C:membrane"/>
    <property type="evidence" value="ECO:0000318"/>
    <property type="project" value="GO_Central"/>
</dbReference>
<dbReference type="GO" id="GO:0005654">
    <property type="term" value="C:nucleoplasm"/>
    <property type="evidence" value="ECO:0000314"/>
    <property type="project" value="HPA"/>
</dbReference>
<dbReference type="GO" id="GO:0032934">
    <property type="term" value="F:sterol binding"/>
    <property type="evidence" value="ECO:0000318"/>
    <property type="project" value="GO_Central"/>
</dbReference>
<dbReference type="GO" id="GO:0045444">
    <property type="term" value="P:fat cell differentiation"/>
    <property type="evidence" value="ECO:0000315"/>
    <property type="project" value="BHF-UCL"/>
</dbReference>
<dbReference type="GO" id="GO:0006869">
    <property type="term" value="P:lipid transport"/>
    <property type="evidence" value="ECO:0007669"/>
    <property type="project" value="UniProtKB-KW"/>
</dbReference>
<dbReference type="GO" id="GO:0070328">
    <property type="term" value="P:triglyceride homeostasis"/>
    <property type="evidence" value="ECO:0000315"/>
    <property type="project" value="BHF-UCL"/>
</dbReference>
<dbReference type="CDD" id="cd13291">
    <property type="entry name" value="PH_ORP10_ORP11"/>
    <property type="match status" value="1"/>
</dbReference>
<dbReference type="FunFam" id="1.10.287.2720:FF:000001">
    <property type="entry name" value="Oxysterol-binding OBPalpha"/>
    <property type="match status" value="1"/>
</dbReference>
<dbReference type="FunFam" id="2.30.29.30:FF:000154">
    <property type="entry name" value="Oxysterol-binding protein"/>
    <property type="match status" value="1"/>
</dbReference>
<dbReference type="FunFam" id="2.40.160.120:FF:000002">
    <property type="entry name" value="Oxysterol-binding protein"/>
    <property type="match status" value="1"/>
</dbReference>
<dbReference type="FunFam" id="3.30.70.3490:FF:000001">
    <property type="entry name" value="Oxysterol-binding protein"/>
    <property type="match status" value="1"/>
</dbReference>
<dbReference type="Gene3D" id="1.10.287.2720">
    <property type="match status" value="1"/>
</dbReference>
<dbReference type="Gene3D" id="2.40.160.120">
    <property type="match status" value="1"/>
</dbReference>
<dbReference type="Gene3D" id="3.30.70.3490">
    <property type="match status" value="1"/>
</dbReference>
<dbReference type="Gene3D" id="2.30.29.30">
    <property type="entry name" value="Pleckstrin-homology domain (PH domain)/Phosphotyrosine-binding domain (PTB)"/>
    <property type="match status" value="1"/>
</dbReference>
<dbReference type="InterPro" id="IPR037239">
    <property type="entry name" value="OSBP_sf"/>
</dbReference>
<dbReference type="InterPro" id="IPR000648">
    <property type="entry name" value="Oxysterol-bd"/>
</dbReference>
<dbReference type="InterPro" id="IPR018494">
    <property type="entry name" value="Oxysterol-bd_CS"/>
</dbReference>
<dbReference type="InterPro" id="IPR011993">
    <property type="entry name" value="PH-like_dom_sf"/>
</dbReference>
<dbReference type="InterPro" id="IPR001849">
    <property type="entry name" value="PH_domain"/>
</dbReference>
<dbReference type="PANTHER" id="PTHR10972">
    <property type="entry name" value="OXYSTEROL-BINDING PROTEIN-RELATED"/>
    <property type="match status" value="1"/>
</dbReference>
<dbReference type="PANTHER" id="PTHR10972:SF46">
    <property type="entry name" value="OXYSTEROL-BINDING PROTEIN-RELATED PROTEIN 11"/>
    <property type="match status" value="1"/>
</dbReference>
<dbReference type="Pfam" id="PF01237">
    <property type="entry name" value="Oxysterol_BP"/>
    <property type="match status" value="2"/>
</dbReference>
<dbReference type="Pfam" id="PF00169">
    <property type="entry name" value="PH"/>
    <property type="match status" value="1"/>
</dbReference>
<dbReference type="SMART" id="SM00233">
    <property type="entry name" value="PH"/>
    <property type="match status" value="1"/>
</dbReference>
<dbReference type="SUPFAM" id="SSF144000">
    <property type="entry name" value="Oxysterol-binding protein-like"/>
    <property type="match status" value="1"/>
</dbReference>
<dbReference type="SUPFAM" id="SSF50729">
    <property type="entry name" value="PH domain-like"/>
    <property type="match status" value="1"/>
</dbReference>
<dbReference type="PROSITE" id="PS01013">
    <property type="entry name" value="OSBP"/>
    <property type="match status" value="1"/>
</dbReference>
<dbReference type="PROSITE" id="PS50003">
    <property type="entry name" value="PH_DOMAIN"/>
    <property type="match status" value="1"/>
</dbReference>
<accession>Q9BXB4</accession>
<accession>A8K9I7</accession>
<comment type="function">
    <text evidence="5 7 9">Plays a role in regulating ADIPOQ and FABP4 levels in differentiating adipocytes and is also involved in regulation of adipocyte triglyceride storage (PubMed:23028956). Weakly binds 25-hydroxycholesterol (PubMed:17428193). Interacts with OSBPL9 to function as lipid transfer proteins (PubMed:39106189). Together they form a heterodimer that localizes at the ER-trans-Golgi membrane contact sites, and exchanges phosphatidylserine (1,2-diacyl-sn-glycero-3-phospho-L-serine, PS) for phosphatidylinositol-4-phosphate (1,2-diacyl-sn-glycero-3-phospho-(1D-myo-inositol 4-phosphate), PI(4)P) between the two organelles, a step that is critical for sphingomyelin synthesis in the Golgi complex (PubMed:39106189).</text>
</comment>
<comment type="catalytic activity">
    <reaction evidence="9">
        <text>a 1,2-diacyl-sn-glycero-3-phospho-(1D-myo-inositol 4-phosphate)(out) + a 1,2-diacyl-sn-glycero-3-phospho-L-serine(in) = a 1,2-diacyl-sn-glycero-3-phospho-(1D-myo-inositol 4-phosphate)(in) + a 1,2-diacyl-sn-glycero-3-phospho-L-serine(out)</text>
        <dbReference type="Rhea" id="RHEA:81667"/>
        <dbReference type="ChEBI" id="CHEBI:57262"/>
        <dbReference type="ChEBI" id="CHEBI:58178"/>
    </reaction>
</comment>
<comment type="subunit">
    <text evidence="6 9">Heterodimer with OSBPL9.</text>
</comment>
<comment type="interaction">
    <interactant intactId="EBI-2514786">
        <id>Q9BXB4</id>
    </interactant>
    <interactant intactId="EBI-2511368">
        <id>Q96SU4</id>
        <label>OSBPL9</label>
    </interactant>
    <organismsDiffer>false</organismsDiffer>
    <experiments>8</experiments>
</comment>
<comment type="subcellular location">
    <subcellularLocation>
        <location evidence="6">Late endosome membrane</location>
    </subcellularLocation>
    <subcellularLocation>
        <location evidence="6">Golgi apparatus</location>
        <location evidence="6">trans-Golgi network membrane</location>
    </subcellularLocation>
    <text>Localizes at the Golgi-late endosome interface.</text>
</comment>
<comment type="tissue specificity">
    <text evidence="6 7">Present at highest levels in ovary, testis, kidney, liver, stomach, brain, and adipose tissue. Strong expression (at protein level) in epithelial cells of kidney tubules, testicular tubules, caecum, and skin (PubMed:20599956). Present at low levels in subcutaneous and visceral adipose tissue (at protein level) (PubMed:23028956).</text>
</comment>
<comment type="developmental stage">
    <text evidence="7">During adipocyte differentiation, levels are elevated two-fold (at protein level).</text>
</comment>
<comment type="domain">
    <text evidence="6">The PH domain binds phosphoinositides.</text>
</comment>
<comment type="similarity">
    <text evidence="10">Belongs to the OSBP family.</text>
</comment>
<protein>
    <recommendedName>
        <fullName>Oxysterol-binding protein-related protein 11</fullName>
        <shortName>ORP-11</shortName>
        <shortName>OSBP-related protein 11</shortName>
    </recommendedName>
</protein>
<organism>
    <name type="scientific">Homo sapiens</name>
    <name type="common">Human</name>
    <dbReference type="NCBI Taxonomy" id="9606"/>
    <lineage>
        <taxon>Eukaryota</taxon>
        <taxon>Metazoa</taxon>
        <taxon>Chordata</taxon>
        <taxon>Craniata</taxon>
        <taxon>Vertebrata</taxon>
        <taxon>Euteleostomi</taxon>
        <taxon>Mammalia</taxon>
        <taxon>Eutheria</taxon>
        <taxon>Euarchontoglires</taxon>
        <taxon>Primates</taxon>
        <taxon>Haplorrhini</taxon>
        <taxon>Catarrhini</taxon>
        <taxon>Hominidae</taxon>
        <taxon>Homo</taxon>
    </lineage>
</organism>
<reference key="1">
    <citation type="journal article" date="2001" name="Genomics">
        <title>A family of 12 human genes containing oxysterol-binding domains.</title>
        <authorList>
            <person name="Jaworski C.J."/>
            <person name="Moreira E."/>
            <person name="Li A."/>
            <person name="Lee R."/>
            <person name="Rodriguez I.R."/>
        </authorList>
    </citation>
    <scope>NUCLEOTIDE SEQUENCE [MRNA]</scope>
</reference>
<reference key="2">
    <citation type="journal article" date="2004" name="Nat. Genet.">
        <title>Complete sequencing and characterization of 21,243 full-length human cDNAs.</title>
        <authorList>
            <person name="Ota T."/>
            <person name="Suzuki Y."/>
            <person name="Nishikawa T."/>
            <person name="Otsuki T."/>
            <person name="Sugiyama T."/>
            <person name="Irie R."/>
            <person name="Wakamatsu A."/>
            <person name="Hayashi K."/>
            <person name="Sato H."/>
            <person name="Nagai K."/>
            <person name="Kimura K."/>
            <person name="Makita H."/>
            <person name="Sekine M."/>
            <person name="Obayashi M."/>
            <person name="Nishi T."/>
            <person name="Shibahara T."/>
            <person name="Tanaka T."/>
            <person name="Ishii S."/>
            <person name="Yamamoto J."/>
            <person name="Saito K."/>
            <person name="Kawai Y."/>
            <person name="Isono Y."/>
            <person name="Nakamura Y."/>
            <person name="Nagahari K."/>
            <person name="Murakami K."/>
            <person name="Yasuda T."/>
            <person name="Iwayanagi T."/>
            <person name="Wagatsuma M."/>
            <person name="Shiratori A."/>
            <person name="Sudo H."/>
            <person name="Hosoiri T."/>
            <person name="Kaku Y."/>
            <person name="Kodaira H."/>
            <person name="Kondo H."/>
            <person name="Sugawara M."/>
            <person name="Takahashi M."/>
            <person name="Kanda K."/>
            <person name="Yokoi T."/>
            <person name="Furuya T."/>
            <person name="Kikkawa E."/>
            <person name="Omura Y."/>
            <person name="Abe K."/>
            <person name="Kamihara K."/>
            <person name="Katsuta N."/>
            <person name="Sato K."/>
            <person name="Tanikawa M."/>
            <person name="Yamazaki M."/>
            <person name="Ninomiya K."/>
            <person name="Ishibashi T."/>
            <person name="Yamashita H."/>
            <person name="Murakawa K."/>
            <person name="Fujimori K."/>
            <person name="Tanai H."/>
            <person name="Kimata M."/>
            <person name="Watanabe M."/>
            <person name="Hiraoka S."/>
            <person name="Chiba Y."/>
            <person name="Ishida S."/>
            <person name="Ono Y."/>
            <person name="Takiguchi S."/>
            <person name="Watanabe S."/>
            <person name="Yosida M."/>
            <person name="Hotuta T."/>
            <person name="Kusano J."/>
            <person name="Kanehori K."/>
            <person name="Takahashi-Fujii A."/>
            <person name="Hara H."/>
            <person name="Tanase T.-O."/>
            <person name="Nomura Y."/>
            <person name="Togiya S."/>
            <person name="Komai F."/>
            <person name="Hara R."/>
            <person name="Takeuchi K."/>
            <person name="Arita M."/>
            <person name="Imose N."/>
            <person name="Musashino K."/>
            <person name="Yuuki H."/>
            <person name="Oshima A."/>
            <person name="Sasaki N."/>
            <person name="Aotsuka S."/>
            <person name="Yoshikawa Y."/>
            <person name="Matsunawa H."/>
            <person name="Ichihara T."/>
            <person name="Shiohata N."/>
            <person name="Sano S."/>
            <person name="Moriya S."/>
            <person name="Momiyama H."/>
            <person name="Satoh N."/>
            <person name="Takami S."/>
            <person name="Terashima Y."/>
            <person name="Suzuki O."/>
            <person name="Nakagawa S."/>
            <person name="Senoh A."/>
            <person name="Mizoguchi H."/>
            <person name="Goto Y."/>
            <person name="Shimizu F."/>
            <person name="Wakebe H."/>
            <person name="Hishigaki H."/>
            <person name="Watanabe T."/>
            <person name="Sugiyama A."/>
            <person name="Takemoto M."/>
            <person name="Kawakami B."/>
            <person name="Yamazaki M."/>
            <person name="Watanabe K."/>
            <person name="Kumagai A."/>
            <person name="Itakura S."/>
            <person name="Fukuzumi Y."/>
            <person name="Fujimori Y."/>
            <person name="Komiyama M."/>
            <person name="Tashiro H."/>
            <person name="Tanigami A."/>
            <person name="Fujiwara T."/>
            <person name="Ono T."/>
            <person name="Yamada K."/>
            <person name="Fujii Y."/>
            <person name="Ozaki K."/>
            <person name="Hirao M."/>
            <person name="Ohmori Y."/>
            <person name="Kawabata A."/>
            <person name="Hikiji T."/>
            <person name="Kobatake N."/>
            <person name="Inagaki H."/>
            <person name="Ikema Y."/>
            <person name="Okamoto S."/>
            <person name="Okitani R."/>
            <person name="Kawakami T."/>
            <person name="Noguchi S."/>
            <person name="Itoh T."/>
            <person name="Shigeta K."/>
            <person name="Senba T."/>
            <person name="Matsumura K."/>
            <person name="Nakajima Y."/>
            <person name="Mizuno T."/>
            <person name="Morinaga M."/>
            <person name="Sasaki M."/>
            <person name="Togashi T."/>
            <person name="Oyama M."/>
            <person name="Hata H."/>
            <person name="Watanabe M."/>
            <person name="Komatsu T."/>
            <person name="Mizushima-Sugano J."/>
            <person name="Satoh T."/>
            <person name="Shirai Y."/>
            <person name="Takahashi Y."/>
            <person name="Nakagawa K."/>
            <person name="Okumura K."/>
            <person name="Nagase T."/>
            <person name="Nomura N."/>
            <person name="Kikuchi H."/>
            <person name="Masuho Y."/>
            <person name="Yamashita R."/>
            <person name="Nakai K."/>
            <person name="Yada T."/>
            <person name="Nakamura Y."/>
            <person name="Ohara O."/>
            <person name="Isogai T."/>
            <person name="Sugano S."/>
        </authorList>
    </citation>
    <scope>NUCLEOTIDE SEQUENCE [LARGE SCALE MRNA]</scope>
    <source>
        <tissue>Thymus</tissue>
    </source>
</reference>
<reference key="3">
    <citation type="submission" date="2005-09" db="EMBL/GenBank/DDBJ databases">
        <authorList>
            <person name="Mural R.J."/>
            <person name="Istrail S."/>
            <person name="Sutton G.G."/>
            <person name="Florea L."/>
            <person name="Halpern A.L."/>
            <person name="Mobarry C.M."/>
            <person name="Lippert R."/>
            <person name="Walenz B."/>
            <person name="Shatkay H."/>
            <person name="Dew I."/>
            <person name="Miller J.R."/>
            <person name="Flanigan M.J."/>
            <person name="Edwards N.J."/>
            <person name="Bolanos R."/>
            <person name="Fasulo D."/>
            <person name="Halldorsson B.V."/>
            <person name="Hannenhalli S."/>
            <person name="Turner R."/>
            <person name="Yooseph S."/>
            <person name="Lu F."/>
            <person name="Nusskern D.R."/>
            <person name="Shue B.C."/>
            <person name="Zheng X.H."/>
            <person name="Zhong F."/>
            <person name="Delcher A.L."/>
            <person name="Huson D.H."/>
            <person name="Kravitz S.A."/>
            <person name="Mouchard L."/>
            <person name="Reinert K."/>
            <person name="Remington K.A."/>
            <person name="Clark A.G."/>
            <person name="Waterman M.S."/>
            <person name="Eichler E.E."/>
            <person name="Adams M.D."/>
            <person name="Hunkapiller M.W."/>
            <person name="Myers E.W."/>
            <person name="Venter J.C."/>
        </authorList>
    </citation>
    <scope>NUCLEOTIDE SEQUENCE [LARGE SCALE GENOMIC DNA]</scope>
</reference>
<reference key="4">
    <citation type="journal article" date="2004" name="Genome Res.">
        <title>The status, quality, and expansion of the NIH full-length cDNA project: the Mammalian Gene Collection (MGC).</title>
        <authorList>
            <consortium name="The MGC Project Team"/>
        </authorList>
    </citation>
    <scope>NUCLEOTIDE SEQUENCE [LARGE SCALE MRNA]</scope>
    <source>
        <tissue>Skin</tissue>
    </source>
</reference>
<reference key="5">
    <citation type="journal article" date="2001" name="J. Lipid Res.">
        <title>The OSBP-related protein family in humans.</title>
        <authorList>
            <person name="Lehto M."/>
            <person name="Laitinen S."/>
            <person name="Chinetti G."/>
            <person name="Johansson M."/>
            <person name="Ehnholm C."/>
            <person name="Staels B."/>
            <person name="Ikonen E."/>
            <person name="Olkkonen V.M."/>
        </authorList>
    </citation>
    <scope>NUCLEOTIDE SEQUENCE [MRNA] OF 1-315</scope>
</reference>
<reference key="6">
    <citation type="journal article" date="2006" name="Cell">
        <title>Global, in vivo, and site-specific phosphorylation dynamics in signaling networks.</title>
        <authorList>
            <person name="Olsen J.V."/>
            <person name="Blagoev B."/>
            <person name="Gnad F."/>
            <person name="Macek B."/>
            <person name="Kumar C."/>
            <person name="Mortensen P."/>
            <person name="Mann M."/>
        </authorList>
    </citation>
    <scope>PHOSPHORYLATION [LARGE SCALE ANALYSIS] AT SER-189</scope>
    <scope>IDENTIFICATION BY MASS SPECTROMETRY [LARGE SCALE ANALYSIS]</scope>
    <source>
        <tissue>Cervix carcinoma</tissue>
    </source>
</reference>
<reference key="7">
    <citation type="journal article" date="2006" name="Nat. Biotechnol.">
        <title>A probability-based approach for high-throughput protein phosphorylation analysis and site localization.</title>
        <authorList>
            <person name="Beausoleil S.A."/>
            <person name="Villen J."/>
            <person name="Gerber S.A."/>
            <person name="Rush J."/>
            <person name="Gygi S.P."/>
        </authorList>
    </citation>
    <scope>PHOSPHORYLATION [LARGE SCALE ANALYSIS] AT SER-181</scope>
    <scope>IDENTIFICATION BY MASS SPECTROMETRY [LARGE SCALE ANALYSIS]</scope>
    <source>
        <tissue>Cervix carcinoma</tissue>
    </source>
</reference>
<reference key="8">
    <citation type="journal article" date="2007" name="Biochem. J.">
        <title>The mammalian oxysterol-binding protein-related proteins (ORPs) bind 25-hydroxycholesterol in an evolutionarily conserved pocket.</title>
        <authorList>
            <person name="Suchanek M."/>
            <person name="Hynynen R."/>
            <person name="Wohlfahrt G."/>
            <person name="Lehto M."/>
            <person name="Johansson M."/>
            <person name="Saarinen H."/>
            <person name="Radzikowska A."/>
            <person name="Thiele C."/>
            <person name="Olkkonen V.M."/>
        </authorList>
    </citation>
    <scope>FUNCTION</scope>
</reference>
<reference key="9">
    <citation type="journal article" date="2008" name="J. Proteome Res.">
        <title>Combining protein-based IMAC, peptide-based IMAC, and MudPIT for efficient phosphoproteomic analysis.</title>
        <authorList>
            <person name="Cantin G.T."/>
            <person name="Yi W."/>
            <person name="Lu B."/>
            <person name="Park S.K."/>
            <person name="Xu T."/>
            <person name="Lee J.-D."/>
            <person name="Yates J.R. III"/>
        </authorList>
    </citation>
    <scope>IDENTIFICATION BY MASS SPECTROMETRY [LARGE SCALE ANALYSIS]</scope>
    <source>
        <tissue>Cervix carcinoma</tissue>
    </source>
</reference>
<reference key="10">
    <citation type="journal article" date="2008" name="Mol. Cell">
        <title>Kinase-selective enrichment enables quantitative phosphoproteomics of the kinome across the cell cycle.</title>
        <authorList>
            <person name="Daub H."/>
            <person name="Olsen J.V."/>
            <person name="Bairlein M."/>
            <person name="Gnad F."/>
            <person name="Oppermann F.S."/>
            <person name="Korner R."/>
            <person name="Greff Z."/>
            <person name="Keri G."/>
            <person name="Stemmann O."/>
            <person name="Mann M."/>
        </authorList>
    </citation>
    <scope>PHOSPHORYLATION [LARGE SCALE ANALYSIS] AT THR-27</scope>
    <scope>IDENTIFICATION BY MASS SPECTROMETRY [LARGE SCALE ANALYSIS]</scope>
    <source>
        <tissue>Cervix carcinoma</tissue>
    </source>
</reference>
<reference key="11">
    <citation type="journal article" date="2008" name="Proc. Natl. Acad. Sci. U.S.A.">
        <title>A quantitative atlas of mitotic phosphorylation.</title>
        <authorList>
            <person name="Dephoure N."/>
            <person name="Zhou C."/>
            <person name="Villen J."/>
            <person name="Beausoleil S.A."/>
            <person name="Bakalarski C.E."/>
            <person name="Elledge S.J."/>
            <person name="Gygi S.P."/>
        </authorList>
    </citation>
    <scope>PHOSPHORYLATION [LARGE SCALE ANALYSIS] AT THR-27; SER-181 AND SER-189</scope>
    <scope>IDENTIFICATION BY MASS SPECTROMETRY [LARGE SCALE ANALYSIS]</scope>
    <source>
        <tissue>Cervix carcinoma</tissue>
    </source>
</reference>
<reference key="12">
    <citation type="journal article" date="2009" name="Anal. Chem.">
        <title>Lys-N and trypsin cover complementary parts of the phosphoproteome in a refined SCX-based approach.</title>
        <authorList>
            <person name="Gauci S."/>
            <person name="Helbig A.O."/>
            <person name="Slijper M."/>
            <person name="Krijgsveld J."/>
            <person name="Heck A.J."/>
            <person name="Mohammed S."/>
        </authorList>
    </citation>
    <scope>ACETYLATION [LARGE SCALE ANALYSIS] AT MET-1</scope>
    <scope>IDENTIFICATION BY MASS SPECTROMETRY [LARGE SCALE ANALYSIS]</scope>
</reference>
<reference key="13">
    <citation type="journal article" date="2009" name="Sci. Signal.">
        <title>Quantitative phosphoproteomic analysis of T cell receptor signaling reveals system-wide modulation of protein-protein interactions.</title>
        <authorList>
            <person name="Mayya V."/>
            <person name="Lundgren D.H."/>
            <person name="Hwang S.-I."/>
            <person name="Rezaul K."/>
            <person name="Wu L."/>
            <person name="Eng J.K."/>
            <person name="Rodionov V."/>
            <person name="Han D.K."/>
        </authorList>
    </citation>
    <scope>PHOSPHORYLATION [LARGE SCALE ANALYSIS] AT THR-27; TYR-62; SER-172; SER-174 AND SER-181</scope>
    <scope>IDENTIFICATION BY MASS SPECTROMETRY [LARGE SCALE ANALYSIS]</scope>
    <source>
        <tissue>Leukemic T-cell</tissue>
    </source>
</reference>
<reference key="14">
    <citation type="journal article" date="2010" name="Exp. Cell Res.">
        <title>OSBP-related protein 11 (ORP11) dimerizes with ORP9 and localizes at the Golgi-late endosome interface.</title>
        <authorList>
            <person name="Zhou Y."/>
            <person name="Li S."/>
            <person name="Mayranpaa M.I."/>
            <person name="Zhong W."/>
            <person name="Back N."/>
            <person name="Yan D."/>
            <person name="Olkkonen V.M."/>
        </authorList>
    </citation>
    <scope>SUBUNIT</scope>
    <scope>SUBCELLULAR LOCATION</scope>
    <scope>TISSUE SPECIFICITY</scope>
</reference>
<reference key="15">
    <citation type="journal article" date="2010" name="Sci. Signal.">
        <title>Quantitative phosphoproteomics reveals widespread full phosphorylation site occupancy during mitosis.</title>
        <authorList>
            <person name="Olsen J.V."/>
            <person name="Vermeulen M."/>
            <person name="Santamaria A."/>
            <person name="Kumar C."/>
            <person name="Miller M.L."/>
            <person name="Jensen L.J."/>
            <person name="Gnad F."/>
            <person name="Cox J."/>
            <person name="Jensen T.S."/>
            <person name="Nigg E.A."/>
            <person name="Brunak S."/>
            <person name="Mann M."/>
        </authorList>
    </citation>
    <scope>PHOSPHORYLATION [LARGE SCALE ANALYSIS] AT THR-27; SER-181 AND SER-189</scope>
    <scope>IDENTIFICATION BY MASS SPECTROMETRY [LARGE SCALE ANALYSIS]</scope>
    <source>
        <tissue>Cervix carcinoma</tissue>
    </source>
</reference>
<reference key="16">
    <citation type="journal article" date="2011" name="BMC Syst. Biol.">
        <title>Initial characterization of the human central proteome.</title>
        <authorList>
            <person name="Burkard T.R."/>
            <person name="Planyavsky M."/>
            <person name="Kaupe I."/>
            <person name="Breitwieser F.P."/>
            <person name="Buerckstuemmer T."/>
            <person name="Bennett K.L."/>
            <person name="Superti-Furga G."/>
            <person name="Colinge J."/>
        </authorList>
    </citation>
    <scope>IDENTIFICATION BY MASS SPECTROMETRY [LARGE SCALE ANALYSIS]</scope>
</reference>
<reference key="17">
    <citation type="journal article" date="2011" name="Sci. Signal.">
        <title>System-wide temporal characterization of the proteome and phosphoproteome of human embryonic stem cell differentiation.</title>
        <authorList>
            <person name="Rigbolt K.T."/>
            <person name="Prokhorova T.A."/>
            <person name="Akimov V."/>
            <person name="Henningsen J."/>
            <person name="Johansen P.T."/>
            <person name="Kratchmarova I."/>
            <person name="Kassem M."/>
            <person name="Mann M."/>
            <person name="Olsen J.V."/>
            <person name="Blagoev B."/>
        </authorList>
    </citation>
    <scope>PHOSPHORYLATION [LARGE SCALE ANALYSIS] AT SER-189</scope>
    <scope>IDENTIFICATION BY MASS SPECTROMETRY [LARGE SCALE ANALYSIS]</scope>
</reference>
<reference key="18">
    <citation type="journal article" date="2012" name="PLoS ONE">
        <title>OSBP-related proteins (ORPs) in human adipose depots and cultured adipocytes: evidence for impacts on the adipocyte phenotype.</title>
        <authorList>
            <person name="Zhou Y."/>
            <person name="Robciuc M.R."/>
            <person name="Wabitsch M."/>
            <person name="Juuti A."/>
            <person name="Leivonen M."/>
            <person name="Ehnholm C."/>
            <person name="Yki-Jarvinen H."/>
            <person name="Olkkonen V.M."/>
        </authorList>
    </citation>
    <scope>FUNCTION</scope>
    <scope>TISSUE SPECIFICITY</scope>
    <scope>DEVELOPMENTAL STAGE</scope>
</reference>
<reference key="19">
    <citation type="journal article" date="2013" name="J. Proteome Res.">
        <title>Toward a comprehensive characterization of a human cancer cell phosphoproteome.</title>
        <authorList>
            <person name="Zhou H."/>
            <person name="Di Palma S."/>
            <person name="Preisinger C."/>
            <person name="Peng M."/>
            <person name="Polat A.N."/>
            <person name="Heck A.J."/>
            <person name="Mohammed S."/>
        </authorList>
    </citation>
    <scope>PHOSPHORYLATION [LARGE SCALE ANALYSIS] AT SER-15; THR-27; SER-172; SER-174; SER-181; SER-184 AND SER-189</scope>
    <scope>IDENTIFICATION BY MASS SPECTROMETRY [LARGE SCALE ANALYSIS]</scope>
    <source>
        <tissue>Cervix carcinoma</tissue>
        <tissue>Erythroleukemia</tissue>
    </source>
</reference>
<reference key="20">
    <citation type="journal article" date="2014" name="J. Proteomics">
        <title>An enzyme assisted RP-RPLC approach for in-depth analysis of human liver phosphoproteome.</title>
        <authorList>
            <person name="Bian Y."/>
            <person name="Song C."/>
            <person name="Cheng K."/>
            <person name="Dong M."/>
            <person name="Wang F."/>
            <person name="Huang J."/>
            <person name="Sun D."/>
            <person name="Wang L."/>
            <person name="Ye M."/>
            <person name="Zou H."/>
        </authorList>
    </citation>
    <scope>PHOSPHORYLATION [LARGE SCALE ANALYSIS] AT SER-15; SER-172 AND SER-181</scope>
    <scope>IDENTIFICATION BY MASS SPECTROMETRY [LARGE SCALE ANALYSIS]</scope>
    <source>
        <tissue>Liver</tissue>
    </source>
</reference>
<reference key="21">
    <citation type="journal article" date="2024" name="Elife">
        <title>The ORP9-ORP11 dimer promotes sphingomyelin synthesis.</title>
        <authorList>
            <person name="Cabukusta B."/>
            <person name="Borst Pauwels S."/>
            <person name="Akkermans J.J.L.L."/>
            <person name="Blomberg N."/>
            <person name="Mulder A.A."/>
            <person name="Koning R.I."/>
            <person name="Giera M."/>
            <person name="Neefjes J."/>
        </authorList>
    </citation>
    <scope>FUNCTION</scope>
    <scope>TRANSPORTER ACTIVITY</scope>
    <scope>SUBUNIT</scope>
</reference>
<reference key="22">
    <citation type="submission" date="2006-06" db="PDB data bank">
        <title>Solution structure of the PH domain of oxysterol binding protein-related protein 11 from human.</title>
        <authorList>
            <consortium name="RIKEN structural genomics initiative (RSGI)"/>
        </authorList>
    </citation>
    <scope>STRUCTURE BY NMR OF 59-165</scope>
</reference>
<reference key="23">
    <citation type="journal article" date="2006" name="Science">
        <title>The consensus coding sequences of human breast and colorectal cancers.</title>
        <authorList>
            <person name="Sjoeblom T."/>
            <person name="Jones S."/>
            <person name="Wood L.D."/>
            <person name="Parsons D.W."/>
            <person name="Lin J."/>
            <person name="Barber T.D."/>
            <person name="Mandelker D."/>
            <person name="Leary R.J."/>
            <person name="Ptak J."/>
            <person name="Silliman N."/>
            <person name="Szabo S."/>
            <person name="Buckhaults P."/>
            <person name="Farrell C."/>
            <person name="Meeh P."/>
            <person name="Markowitz S.D."/>
            <person name="Willis J."/>
            <person name="Dawson D."/>
            <person name="Willson J.K.V."/>
            <person name="Gazdar A.F."/>
            <person name="Hartigan J."/>
            <person name="Wu L."/>
            <person name="Liu C."/>
            <person name="Parmigiani G."/>
            <person name="Park B.H."/>
            <person name="Bachman K.E."/>
            <person name="Papadopoulos N."/>
            <person name="Vogelstein B."/>
            <person name="Kinzler K.W."/>
            <person name="Velculescu V.E."/>
        </authorList>
    </citation>
    <scope>VARIANT [LARGE SCALE ANALYSIS] LEU-184</scope>
</reference>
<reference key="24">
    <citation type="journal article" date="2017" name="Eur. J. Hum. Genet.">
        <title>Severe neurodegenerative disease in brothers with homozygous mutation in POLR1A.</title>
        <authorList>
            <person name="Kara B."/>
            <person name="Koeroglu C."/>
            <person name="Peltonen K."/>
            <person name="Steinberg R.C."/>
            <person name="Maras Genc H."/>
            <person name="Hoelttae-Vuori M."/>
            <person name="Gueven A."/>
            <person name="Kanerva K."/>
            <person name="Kotil T."/>
            <person name="Solakoglu S."/>
            <person name="Zhou Y."/>
            <person name="Olkkonen V.M."/>
            <person name="Ikonen E."/>
            <person name="Laiho M."/>
            <person name="Tolun A."/>
        </authorList>
    </citation>
    <scope>VARIANT TRP-171</scope>
</reference>
<feature type="chain" id="PRO_0000100381" description="Oxysterol-binding protein-related protein 11">
    <location>
        <begin position="1"/>
        <end position="747"/>
    </location>
</feature>
<feature type="domain" description="PH" evidence="2">
    <location>
        <begin position="58"/>
        <end position="155"/>
    </location>
</feature>
<feature type="region of interest" description="Disordered" evidence="3">
    <location>
        <begin position="1"/>
        <end position="50"/>
    </location>
</feature>
<feature type="region of interest" description="Disordered" evidence="3">
    <location>
        <begin position="158"/>
        <end position="188"/>
    </location>
</feature>
<feature type="region of interest" description="Disordered" evidence="3">
    <location>
        <begin position="689"/>
        <end position="714"/>
    </location>
</feature>
<feature type="compositionally biased region" description="Low complexity" evidence="3">
    <location>
        <begin position="170"/>
        <end position="184"/>
    </location>
</feature>
<feature type="compositionally biased region" description="Basic and acidic residues" evidence="3">
    <location>
        <begin position="689"/>
        <end position="713"/>
    </location>
</feature>
<feature type="modified residue" description="N-acetylmethionine" evidence="15">
    <location>
        <position position="1"/>
    </location>
</feature>
<feature type="modified residue" description="Phosphoserine" evidence="19 20">
    <location>
        <position position="15"/>
    </location>
</feature>
<feature type="modified residue" description="Phosphothreonine" evidence="13 14 16 17 19">
    <location>
        <position position="27"/>
    </location>
</feature>
<feature type="modified residue" description="Phosphotyrosine" evidence="16">
    <location>
        <position position="62"/>
    </location>
</feature>
<feature type="modified residue" description="Phosphoserine" evidence="16 19 20">
    <location>
        <position position="172"/>
    </location>
</feature>
<feature type="modified residue" description="Phosphoserine" evidence="16 19">
    <location>
        <position position="174"/>
    </location>
</feature>
<feature type="modified residue" description="Phosphoserine" evidence="1">
    <location>
        <position position="177"/>
    </location>
</feature>
<feature type="modified residue" description="Phosphoserine" evidence="11 13 16 17 19 20">
    <location>
        <position position="181"/>
    </location>
</feature>
<feature type="modified residue" description="Phosphoserine" evidence="19">
    <location>
        <position position="184"/>
    </location>
</feature>
<feature type="modified residue" description="Phosphoserine" evidence="12 13 17 18 19">
    <location>
        <position position="189"/>
    </location>
</feature>
<feature type="sequence variant" id="VAR_089260" description="Found in a neurodegenerative disorder with demyelinating leukodystrophy; uncertain significance; dbSNP:rs370760880." evidence="8">
    <original>R</original>
    <variation>W</variation>
    <location>
        <position position="171"/>
    </location>
</feature>
<feature type="sequence variant" id="VAR_036100" description="In a breast cancer sample; somatic mutation; dbSNP:rs746035150." evidence="4">
    <original>S</original>
    <variation>L</variation>
    <location>
        <position position="184"/>
    </location>
</feature>
<feature type="strand" evidence="21">
    <location>
        <begin position="62"/>
        <end position="70"/>
    </location>
</feature>
<feature type="turn" evidence="21">
    <location>
        <begin position="71"/>
        <end position="73"/>
    </location>
</feature>
<feature type="strand" evidence="21">
    <location>
        <begin position="74"/>
        <end position="82"/>
    </location>
</feature>
<feature type="turn" evidence="21">
    <location>
        <begin position="84"/>
        <end position="86"/>
    </location>
</feature>
<feature type="strand" evidence="21">
    <location>
        <begin position="88"/>
        <end position="94"/>
    </location>
</feature>
<feature type="helix" evidence="21">
    <location>
        <begin position="95"/>
        <end position="97"/>
    </location>
</feature>
<feature type="strand" evidence="21">
    <location>
        <begin position="98"/>
        <end position="100"/>
    </location>
</feature>
<feature type="strand" evidence="21">
    <location>
        <begin position="103"/>
        <end position="107"/>
    </location>
</feature>
<feature type="strand" evidence="21">
    <location>
        <begin position="117"/>
        <end position="121"/>
    </location>
</feature>
<feature type="strand" evidence="21">
    <location>
        <begin position="123"/>
        <end position="125"/>
    </location>
</feature>
<feature type="strand" evidence="21">
    <location>
        <begin position="128"/>
        <end position="130"/>
    </location>
</feature>
<feature type="strand" evidence="21">
    <location>
        <begin position="133"/>
        <end position="135"/>
    </location>
</feature>
<feature type="helix" evidence="21">
    <location>
        <begin position="140"/>
        <end position="160"/>
    </location>
</feature>